<feature type="signal peptide" evidence="2">
    <location>
        <begin position="1"/>
        <end position="22"/>
    </location>
</feature>
<feature type="chain" id="PRO_0000041393" description="WAP four-disulfide core domain protein 13">
    <location>
        <begin position="23"/>
        <end position="93"/>
    </location>
</feature>
<feature type="domain" description="WAP; atypical">
    <location>
        <begin position="24"/>
        <end position="73"/>
    </location>
</feature>
<feature type="disulfide bond" evidence="1">
    <location>
        <begin position="45"/>
        <end position="66"/>
    </location>
</feature>
<feature type="disulfide bond" evidence="1">
    <location>
        <begin position="49"/>
        <end position="61"/>
    </location>
</feature>
<feature type="disulfide bond" evidence="1">
    <location>
        <begin position="55"/>
        <end position="70"/>
    </location>
</feature>
<gene>
    <name type="primary">WFDC13</name>
    <name type="synonym">C20orf138</name>
    <name type="synonym">WAP13</name>
</gene>
<comment type="function">
    <text evidence="1">Putative acid-stable proteinase inhibitor.</text>
</comment>
<comment type="interaction">
    <interactant intactId="EBI-12041955">
        <id>Q8IUB5</id>
    </interactant>
    <interactant intactId="EBI-16439278">
        <id>Q6FHY5</id>
        <label>MEOX2</label>
    </interactant>
    <organismsDiffer>false</organismsDiffer>
    <experiments>3</experiments>
</comment>
<comment type="interaction">
    <interactant intactId="EBI-12041955">
        <id>Q8IUB5</id>
    </interactant>
    <interactant intactId="EBI-347996">
        <id>O43765</id>
        <label>SGTA</label>
    </interactant>
    <organismsDiffer>false</organismsDiffer>
    <experiments>5</experiments>
</comment>
<comment type="subcellular location">
    <subcellularLocation>
        <location evidence="3">Secreted</location>
    </subcellularLocation>
</comment>
<evidence type="ECO:0000250" key="1"/>
<evidence type="ECO:0000255" key="2"/>
<evidence type="ECO:0000305" key="3"/>
<protein>
    <recommendedName>
        <fullName>WAP four-disulfide core domain protein 13</fullName>
    </recommendedName>
</protein>
<proteinExistence type="evidence at protein level"/>
<organism>
    <name type="scientific">Homo sapiens</name>
    <name type="common">Human</name>
    <dbReference type="NCBI Taxonomy" id="9606"/>
    <lineage>
        <taxon>Eukaryota</taxon>
        <taxon>Metazoa</taxon>
        <taxon>Chordata</taxon>
        <taxon>Craniata</taxon>
        <taxon>Vertebrata</taxon>
        <taxon>Euteleostomi</taxon>
        <taxon>Mammalia</taxon>
        <taxon>Eutheria</taxon>
        <taxon>Euarchontoglires</taxon>
        <taxon>Primates</taxon>
        <taxon>Haplorrhini</taxon>
        <taxon>Catarrhini</taxon>
        <taxon>Hominidae</taxon>
        <taxon>Homo</taxon>
    </lineage>
</organism>
<keyword id="KW-1015">Disulfide bond</keyword>
<keyword id="KW-0646">Protease inhibitor</keyword>
<keyword id="KW-1185">Reference proteome</keyword>
<keyword id="KW-0964">Secreted</keyword>
<keyword id="KW-0722">Serine protease inhibitor</keyword>
<keyword id="KW-0732">Signal</keyword>
<sequence>MKPVLPLQFLVVFCLALQLVPGSPKQRVLKYILEPPPCISAPENCTHLCTMQEDCEKGFQCCSSFCGIVCSSETFQKRNRIKHKGSEVIMPAN</sequence>
<reference key="1">
    <citation type="journal article" date="2002" name="Biochem. J.">
        <title>A locus on human chromosome 20 contains several genes expressing protease inhibitor domains with homology to whey acidic protein.</title>
        <authorList>
            <person name="Clauss A."/>
            <person name="Lilja H."/>
            <person name="Lundwall A."/>
        </authorList>
    </citation>
    <scope>NUCLEOTIDE SEQUENCE [MRNA]</scope>
</reference>
<reference key="2">
    <citation type="journal article" date="2001" name="Nature">
        <title>The DNA sequence and comparative analysis of human chromosome 20.</title>
        <authorList>
            <person name="Deloukas P."/>
            <person name="Matthews L.H."/>
            <person name="Ashurst J.L."/>
            <person name="Burton J."/>
            <person name="Gilbert J.G.R."/>
            <person name="Jones M."/>
            <person name="Stavrides G."/>
            <person name="Almeida J.P."/>
            <person name="Babbage A.K."/>
            <person name="Bagguley C.L."/>
            <person name="Bailey J."/>
            <person name="Barlow K.F."/>
            <person name="Bates K.N."/>
            <person name="Beard L.M."/>
            <person name="Beare D.M."/>
            <person name="Beasley O.P."/>
            <person name="Bird C.P."/>
            <person name="Blakey S.E."/>
            <person name="Bridgeman A.M."/>
            <person name="Brown A.J."/>
            <person name="Buck D."/>
            <person name="Burrill W.D."/>
            <person name="Butler A.P."/>
            <person name="Carder C."/>
            <person name="Carter N.P."/>
            <person name="Chapman J.C."/>
            <person name="Clamp M."/>
            <person name="Clark G."/>
            <person name="Clark L.N."/>
            <person name="Clark S.Y."/>
            <person name="Clee C.M."/>
            <person name="Clegg S."/>
            <person name="Cobley V.E."/>
            <person name="Collier R.E."/>
            <person name="Connor R.E."/>
            <person name="Corby N.R."/>
            <person name="Coulson A."/>
            <person name="Coville G.J."/>
            <person name="Deadman R."/>
            <person name="Dhami P.D."/>
            <person name="Dunn M."/>
            <person name="Ellington A.G."/>
            <person name="Frankland J.A."/>
            <person name="Fraser A."/>
            <person name="French L."/>
            <person name="Garner P."/>
            <person name="Grafham D.V."/>
            <person name="Griffiths C."/>
            <person name="Griffiths M.N.D."/>
            <person name="Gwilliam R."/>
            <person name="Hall R.E."/>
            <person name="Hammond S."/>
            <person name="Harley J.L."/>
            <person name="Heath P.D."/>
            <person name="Ho S."/>
            <person name="Holden J.L."/>
            <person name="Howden P.J."/>
            <person name="Huckle E."/>
            <person name="Hunt A.R."/>
            <person name="Hunt S.E."/>
            <person name="Jekosch K."/>
            <person name="Johnson C.M."/>
            <person name="Johnson D."/>
            <person name="Kay M.P."/>
            <person name="Kimberley A.M."/>
            <person name="King A."/>
            <person name="Knights A."/>
            <person name="Laird G.K."/>
            <person name="Lawlor S."/>
            <person name="Lehvaeslaiho M.H."/>
            <person name="Leversha M.A."/>
            <person name="Lloyd C."/>
            <person name="Lloyd D.M."/>
            <person name="Lovell J.D."/>
            <person name="Marsh V.L."/>
            <person name="Martin S.L."/>
            <person name="McConnachie L.J."/>
            <person name="McLay K."/>
            <person name="McMurray A.A."/>
            <person name="Milne S.A."/>
            <person name="Mistry D."/>
            <person name="Moore M.J.F."/>
            <person name="Mullikin J.C."/>
            <person name="Nickerson T."/>
            <person name="Oliver K."/>
            <person name="Parker A."/>
            <person name="Patel R."/>
            <person name="Pearce T.A.V."/>
            <person name="Peck A.I."/>
            <person name="Phillimore B.J.C.T."/>
            <person name="Prathalingam S.R."/>
            <person name="Plumb R.W."/>
            <person name="Ramsay H."/>
            <person name="Rice C.M."/>
            <person name="Ross M.T."/>
            <person name="Scott C.E."/>
            <person name="Sehra H.K."/>
            <person name="Shownkeen R."/>
            <person name="Sims S."/>
            <person name="Skuce C.D."/>
            <person name="Smith M.L."/>
            <person name="Soderlund C."/>
            <person name="Steward C.A."/>
            <person name="Sulston J.E."/>
            <person name="Swann R.M."/>
            <person name="Sycamore N."/>
            <person name="Taylor R."/>
            <person name="Tee L."/>
            <person name="Thomas D.W."/>
            <person name="Thorpe A."/>
            <person name="Tracey A."/>
            <person name="Tromans A.C."/>
            <person name="Vaudin M."/>
            <person name="Wall M."/>
            <person name="Wallis J.M."/>
            <person name="Whitehead S.L."/>
            <person name="Whittaker P."/>
            <person name="Willey D.L."/>
            <person name="Williams L."/>
            <person name="Williams S.A."/>
            <person name="Wilming L."/>
            <person name="Wray P.W."/>
            <person name="Hubbard T."/>
            <person name="Durbin R.M."/>
            <person name="Bentley D.R."/>
            <person name="Beck S."/>
            <person name="Rogers J."/>
        </authorList>
    </citation>
    <scope>NUCLEOTIDE SEQUENCE [LARGE SCALE GENOMIC DNA]</scope>
</reference>
<dbReference type="EMBL" id="AF454505">
    <property type="protein sequence ID" value="AAN70988.1"/>
    <property type="molecule type" value="mRNA"/>
</dbReference>
<dbReference type="EMBL" id="AL109656">
    <property type="status" value="NOT_ANNOTATED_CDS"/>
    <property type="molecule type" value="Genomic_DNA"/>
</dbReference>
<dbReference type="CCDS" id="CCDS13367.1"/>
<dbReference type="RefSeq" id="NP_742002.1">
    <property type="nucleotide sequence ID" value="NM_172005.2"/>
</dbReference>
<dbReference type="SMR" id="Q8IUB5"/>
<dbReference type="BioGRID" id="127891">
    <property type="interactions" value="2"/>
</dbReference>
<dbReference type="IntAct" id="Q8IUB5">
    <property type="interactions" value="2"/>
</dbReference>
<dbReference type="STRING" id="9606.ENSP00000302938"/>
<dbReference type="iPTMnet" id="Q8IUB5"/>
<dbReference type="BioMuta" id="WFDC13"/>
<dbReference type="DMDM" id="29611896"/>
<dbReference type="MassIVE" id="Q8IUB5"/>
<dbReference type="PaxDb" id="9606-ENSP00000302938"/>
<dbReference type="PeptideAtlas" id="Q8IUB5"/>
<dbReference type="ProteomicsDB" id="70537"/>
<dbReference type="Antibodypedia" id="82284">
    <property type="antibodies" value="1 antibodies from 1 providers"/>
</dbReference>
<dbReference type="DNASU" id="164237"/>
<dbReference type="Ensembl" id="ENST00000305479.3">
    <property type="protein sequence ID" value="ENSP00000302938.2"/>
    <property type="gene ID" value="ENSG00000168634.5"/>
</dbReference>
<dbReference type="GeneID" id="164237"/>
<dbReference type="KEGG" id="hsa:164237"/>
<dbReference type="MANE-Select" id="ENST00000305479.3">
    <property type="protein sequence ID" value="ENSP00000302938.2"/>
    <property type="RefSeq nucleotide sequence ID" value="NM_172005.2"/>
    <property type="RefSeq protein sequence ID" value="NP_742002.1"/>
</dbReference>
<dbReference type="UCSC" id="uc002xpd.3">
    <property type="organism name" value="human"/>
</dbReference>
<dbReference type="AGR" id="HGNC:16131"/>
<dbReference type="CTD" id="164237"/>
<dbReference type="GeneCards" id="WFDC13"/>
<dbReference type="HGNC" id="HGNC:16131">
    <property type="gene designation" value="WFDC13"/>
</dbReference>
<dbReference type="HPA" id="ENSG00000168634">
    <property type="expression patterns" value="Tissue enriched (epididymis)"/>
</dbReference>
<dbReference type="neXtProt" id="NX_Q8IUB5"/>
<dbReference type="OpenTargets" id="ENSG00000168634"/>
<dbReference type="PharmGKB" id="PA25680"/>
<dbReference type="VEuPathDB" id="HostDB:ENSG00000168634"/>
<dbReference type="eggNOG" id="KOG4295">
    <property type="taxonomic scope" value="Eukaryota"/>
</dbReference>
<dbReference type="GeneTree" id="ENSGT00390000012268"/>
<dbReference type="HOGENOM" id="CLU_2612246_0_0_1"/>
<dbReference type="InParanoid" id="Q8IUB5"/>
<dbReference type="OMA" id="GSPKQHF"/>
<dbReference type="OrthoDB" id="9836967at2759"/>
<dbReference type="PAN-GO" id="Q8IUB5">
    <property type="GO annotations" value="4 GO annotations based on evolutionary models"/>
</dbReference>
<dbReference type="PhylomeDB" id="Q8IUB5"/>
<dbReference type="TreeFam" id="TF341262"/>
<dbReference type="PathwayCommons" id="Q8IUB5"/>
<dbReference type="SignaLink" id="Q8IUB5"/>
<dbReference type="BioGRID-ORCS" id="164237">
    <property type="hits" value="28 hits in 1130 CRISPR screens"/>
</dbReference>
<dbReference type="GenomeRNAi" id="164237"/>
<dbReference type="Pharos" id="Q8IUB5">
    <property type="development level" value="Tdark"/>
</dbReference>
<dbReference type="PRO" id="PR:Q8IUB5"/>
<dbReference type="Proteomes" id="UP000005640">
    <property type="component" value="Chromosome 20"/>
</dbReference>
<dbReference type="RNAct" id="Q8IUB5">
    <property type="molecule type" value="protein"/>
</dbReference>
<dbReference type="Bgee" id="ENSG00000168634">
    <property type="expression patterns" value="Expressed in cauda epididymis and 51 other cell types or tissues"/>
</dbReference>
<dbReference type="GO" id="GO:0005615">
    <property type="term" value="C:extracellular space"/>
    <property type="evidence" value="ECO:0000318"/>
    <property type="project" value="GO_Central"/>
</dbReference>
<dbReference type="GO" id="GO:0004867">
    <property type="term" value="F:serine-type endopeptidase inhibitor activity"/>
    <property type="evidence" value="ECO:0000318"/>
    <property type="project" value="GO_Central"/>
</dbReference>
<dbReference type="GO" id="GO:0019731">
    <property type="term" value="P:antibacterial humoral response"/>
    <property type="evidence" value="ECO:0000318"/>
    <property type="project" value="GO_Central"/>
</dbReference>
<dbReference type="GO" id="GO:0045087">
    <property type="term" value="P:innate immune response"/>
    <property type="evidence" value="ECO:0000318"/>
    <property type="project" value="GO_Central"/>
</dbReference>
<accession>Q8IUB5</accession>
<accession>Q5TEU7</accession>
<accession>Q8WWK7</accession>
<name>WFD13_HUMAN</name>